<dbReference type="EMBL" id="U94322">
    <property type="protein sequence ID" value="AAB53220.1"/>
    <property type="molecule type" value="mRNA"/>
</dbReference>
<dbReference type="EMBL" id="AF010318">
    <property type="protein sequence ID" value="AAC53358.1"/>
    <property type="molecule type" value="mRNA"/>
</dbReference>
<dbReference type="EMBL" id="Y15248">
    <property type="protein sequence ID" value="CAA75532.1"/>
    <property type="molecule type" value="mRNA"/>
</dbReference>
<dbReference type="EMBL" id="AF008548">
    <property type="protein sequence ID" value="AAB62573.1"/>
    <property type="molecule type" value="mRNA"/>
</dbReference>
<dbReference type="RefSeq" id="NP_062045.1">
    <property type="nucleotide sequence ID" value="NM_019172.5"/>
</dbReference>
<dbReference type="RefSeq" id="XP_008766654.1">
    <property type="nucleotide sequence ID" value="XM_008768432.2"/>
</dbReference>
<dbReference type="RefSeq" id="XP_017459673.1">
    <property type="nucleotide sequence ID" value="XM_017604184.1"/>
</dbReference>
<dbReference type="SMR" id="O08726"/>
<dbReference type="BioGRID" id="247911">
    <property type="interactions" value="1"/>
</dbReference>
<dbReference type="CORUM" id="O08726"/>
<dbReference type="FunCoup" id="O08726">
    <property type="interactions" value="101"/>
</dbReference>
<dbReference type="IntAct" id="O08726">
    <property type="interactions" value="1"/>
</dbReference>
<dbReference type="STRING" id="10116.ENSRNOP00000073780"/>
<dbReference type="BindingDB" id="O08726"/>
<dbReference type="ChEMBL" id="CHEMBL5577"/>
<dbReference type="GuidetoPHARMACOLOGY" id="244"/>
<dbReference type="GlyCosmos" id="O08726">
    <property type="glycosylation" value="2 sites, No reported glycans"/>
</dbReference>
<dbReference type="GlyGen" id="O08726">
    <property type="glycosylation" value="2 sites"/>
</dbReference>
<dbReference type="PhosphoSitePlus" id="O08726"/>
<dbReference type="PaxDb" id="10116-ENSRNOP00000012523"/>
<dbReference type="Ensembl" id="ENSRNOT00000086288.2">
    <property type="protein sequence ID" value="ENSRNOP00000073780.1"/>
    <property type="gene ID" value="ENSRNOG00000061733.2"/>
</dbReference>
<dbReference type="GeneID" id="29234"/>
<dbReference type="KEGG" id="rno:29234"/>
<dbReference type="AGR" id="RGD:2657"/>
<dbReference type="CTD" id="8811"/>
<dbReference type="RGD" id="2657">
    <property type="gene designation" value="Galr2"/>
</dbReference>
<dbReference type="eggNOG" id="KOG3656">
    <property type="taxonomic scope" value="Eukaryota"/>
</dbReference>
<dbReference type="GeneTree" id="ENSGT01130000278323"/>
<dbReference type="InParanoid" id="O08726"/>
<dbReference type="OMA" id="LTYTRTI"/>
<dbReference type="OrthoDB" id="5964776at2759"/>
<dbReference type="PhylomeDB" id="O08726"/>
<dbReference type="TreeFam" id="TF315737"/>
<dbReference type="Reactome" id="R-RNO-375276">
    <property type="pathway name" value="Peptide ligand-binding receptors"/>
</dbReference>
<dbReference type="Reactome" id="R-RNO-418594">
    <property type="pathway name" value="G alpha (i) signalling events"/>
</dbReference>
<dbReference type="PRO" id="PR:O08726"/>
<dbReference type="Proteomes" id="UP000002494">
    <property type="component" value="Chromosome 10"/>
</dbReference>
<dbReference type="Bgee" id="ENSRNOG00000061733">
    <property type="expression patterns" value="Expressed in esophagus and 19 other cell types or tissues"/>
</dbReference>
<dbReference type="GO" id="GO:0005929">
    <property type="term" value="C:cilium"/>
    <property type="evidence" value="ECO:0000266"/>
    <property type="project" value="RGD"/>
</dbReference>
<dbReference type="GO" id="GO:0005886">
    <property type="term" value="C:plasma membrane"/>
    <property type="evidence" value="ECO:0000318"/>
    <property type="project" value="GO_Central"/>
</dbReference>
<dbReference type="GO" id="GO:0004966">
    <property type="term" value="F:galanin receptor activity"/>
    <property type="evidence" value="ECO:0000314"/>
    <property type="project" value="RGD"/>
</dbReference>
<dbReference type="GO" id="GO:0042923">
    <property type="term" value="F:neuropeptide binding"/>
    <property type="evidence" value="ECO:0000314"/>
    <property type="project" value="RGD"/>
</dbReference>
<dbReference type="GO" id="GO:0017046">
    <property type="term" value="F:peptide hormone binding"/>
    <property type="evidence" value="ECO:0000250"/>
    <property type="project" value="UniProtKB"/>
</dbReference>
<dbReference type="GO" id="GO:0007189">
    <property type="term" value="P:adenylate cyclase-activating G protein-coupled receptor signaling pathway"/>
    <property type="evidence" value="ECO:0000315"/>
    <property type="project" value="RGD"/>
</dbReference>
<dbReference type="GO" id="GO:0007188">
    <property type="term" value="P:adenylate cyclase-modulating G protein-coupled receptor signaling pathway"/>
    <property type="evidence" value="ECO:0000318"/>
    <property type="project" value="GO_Central"/>
</dbReference>
<dbReference type="GO" id="GO:0007186">
    <property type="term" value="P:G protein-coupled receptor signaling pathway"/>
    <property type="evidence" value="ECO:0000314"/>
    <property type="project" value="RGD"/>
</dbReference>
<dbReference type="GO" id="GO:0090663">
    <property type="term" value="P:galanin-activated signaling pathway"/>
    <property type="evidence" value="ECO:0000266"/>
    <property type="project" value="RGD"/>
</dbReference>
<dbReference type="GO" id="GO:0043647">
    <property type="term" value="P:inositol phosphate metabolic process"/>
    <property type="evidence" value="ECO:0000314"/>
    <property type="project" value="RGD"/>
</dbReference>
<dbReference type="GO" id="GO:0031175">
    <property type="term" value="P:neuron projection development"/>
    <property type="evidence" value="ECO:0000266"/>
    <property type="project" value="RGD"/>
</dbReference>
<dbReference type="GO" id="GO:0007218">
    <property type="term" value="P:neuropeptide signaling pathway"/>
    <property type="evidence" value="ECO:0000318"/>
    <property type="project" value="GO_Central"/>
</dbReference>
<dbReference type="GO" id="GO:0046488">
    <property type="term" value="P:phosphatidylinositol metabolic process"/>
    <property type="evidence" value="ECO:0000314"/>
    <property type="project" value="RGD"/>
</dbReference>
<dbReference type="GO" id="GO:0007200">
    <property type="term" value="P:phospholipase C-activating G protein-coupled receptor signaling pathway"/>
    <property type="evidence" value="ECO:0000266"/>
    <property type="project" value="RGD"/>
</dbReference>
<dbReference type="GO" id="GO:0007204">
    <property type="term" value="P:positive regulation of cytosolic calcium ion concentration"/>
    <property type="evidence" value="ECO:0000314"/>
    <property type="project" value="RGD"/>
</dbReference>
<dbReference type="GO" id="GO:0045944">
    <property type="term" value="P:positive regulation of transcription by RNA polymerase II"/>
    <property type="evidence" value="ECO:0000250"/>
    <property type="project" value="UniProtKB"/>
</dbReference>
<dbReference type="CDD" id="cd15097">
    <property type="entry name" value="7tmA_Gal2_Gal3_R"/>
    <property type="match status" value="1"/>
</dbReference>
<dbReference type="FunFam" id="1.20.1070.10:FF:000092">
    <property type="entry name" value="Galanin receptor type 2"/>
    <property type="match status" value="1"/>
</dbReference>
<dbReference type="Gene3D" id="1.20.1070.10">
    <property type="entry name" value="Rhodopsin 7-helix transmembrane proteins"/>
    <property type="match status" value="1"/>
</dbReference>
<dbReference type="InterPro" id="IPR003907">
    <property type="entry name" value="GAL2_rcpt"/>
</dbReference>
<dbReference type="InterPro" id="IPR000405">
    <property type="entry name" value="Galanin_rcpt"/>
</dbReference>
<dbReference type="InterPro" id="IPR000276">
    <property type="entry name" value="GPCR_Rhodpsn"/>
</dbReference>
<dbReference type="InterPro" id="IPR017452">
    <property type="entry name" value="GPCR_Rhodpsn_7TM"/>
</dbReference>
<dbReference type="PANTHER" id="PTHR45695:SF35">
    <property type="entry name" value="GALANIN RECEPTOR TYPE 2-LIKE ISOFORM X2"/>
    <property type="match status" value="1"/>
</dbReference>
<dbReference type="PANTHER" id="PTHR45695">
    <property type="entry name" value="LEUCOKININ RECEPTOR-RELATED"/>
    <property type="match status" value="1"/>
</dbReference>
<dbReference type="Pfam" id="PF00001">
    <property type="entry name" value="7tm_1"/>
    <property type="match status" value="1"/>
</dbReference>
<dbReference type="PRINTS" id="PR01419">
    <property type="entry name" value="GALANIN2R"/>
</dbReference>
<dbReference type="PRINTS" id="PR00663">
    <property type="entry name" value="GALANINR"/>
</dbReference>
<dbReference type="PRINTS" id="PR00237">
    <property type="entry name" value="GPCRRHODOPSN"/>
</dbReference>
<dbReference type="SMART" id="SM01381">
    <property type="entry name" value="7TM_GPCR_Srsx"/>
    <property type="match status" value="1"/>
</dbReference>
<dbReference type="SUPFAM" id="SSF81321">
    <property type="entry name" value="Family A G protein-coupled receptor-like"/>
    <property type="match status" value="1"/>
</dbReference>
<dbReference type="PROSITE" id="PS00237">
    <property type="entry name" value="G_PROTEIN_RECEP_F1_1"/>
    <property type="match status" value="1"/>
</dbReference>
<dbReference type="PROSITE" id="PS50262">
    <property type="entry name" value="G_PROTEIN_RECEP_F1_2"/>
    <property type="match status" value="1"/>
</dbReference>
<feature type="chain" id="PRO_0000069468" description="Galanin receptor type 2">
    <location>
        <begin position="1"/>
        <end position="372"/>
    </location>
</feature>
<feature type="topological domain" description="Extracellular" evidence="1">
    <location>
        <begin position="1"/>
        <end position="28"/>
    </location>
</feature>
<feature type="transmembrane region" description="Helical; Name=1" evidence="1">
    <location>
        <begin position="29"/>
        <end position="49"/>
    </location>
</feature>
<feature type="topological domain" description="Cytoplasmic" evidence="1">
    <location>
        <begin position="50"/>
        <end position="60"/>
    </location>
</feature>
<feature type="transmembrane region" description="Helical; Name=2" evidence="1">
    <location>
        <begin position="61"/>
        <end position="81"/>
    </location>
</feature>
<feature type="topological domain" description="Extracellular" evidence="1">
    <location>
        <begin position="82"/>
        <end position="99"/>
    </location>
</feature>
<feature type="transmembrane region" description="Helical; Name=3" evidence="1">
    <location>
        <begin position="100"/>
        <end position="121"/>
    </location>
</feature>
<feature type="topological domain" description="Cytoplasmic" evidence="1">
    <location>
        <begin position="122"/>
        <end position="141"/>
    </location>
</feature>
<feature type="transmembrane region" description="Helical; Name=4" evidence="1">
    <location>
        <begin position="142"/>
        <end position="162"/>
    </location>
</feature>
<feature type="topological domain" description="Extracellular" evidence="1">
    <location>
        <begin position="163"/>
        <end position="187"/>
    </location>
</feature>
<feature type="transmembrane region" description="Helical; Name=5" evidence="1">
    <location>
        <begin position="188"/>
        <end position="208"/>
    </location>
</feature>
<feature type="topological domain" description="Cytoplasmic" evidence="1">
    <location>
        <begin position="209"/>
        <end position="237"/>
    </location>
</feature>
<feature type="transmembrane region" description="Helical; Name=6" evidence="1">
    <location>
        <begin position="238"/>
        <end position="258"/>
    </location>
</feature>
<feature type="topological domain" description="Extracellular" evidence="1">
    <location>
        <begin position="259"/>
        <end position="260"/>
    </location>
</feature>
<feature type="transmembrane region" description="Helical; Name=7" evidence="1">
    <location>
        <begin position="261"/>
        <end position="281"/>
    </location>
</feature>
<feature type="topological domain" description="Cytoplasmic" evidence="1">
    <location>
        <begin position="282"/>
        <end position="372"/>
    </location>
</feature>
<feature type="region of interest" description="Disordered" evidence="3">
    <location>
        <begin position="353"/>
        <end position="372"/>
    </location>
</feature>
<feature type="compositionally biased region" description="Polar residues" evidence="3">
    <location>
        <begin position="361"/>
        <end position="372"/>
    </location>
</feature>
<feature type="glycosylation site" description="N-linked (GlcNAc...) asparagine" evidence="1">
    <location>
        <position position="2"/>
    </location>
</feature>
<feature type="glycosylation site" description="N-linked (GlcNAc...) asparagine" evidence="1">
    <location>
        <position position="11"/>
    </location>
</feature>
<feature type="disulfide bond" evidence="2">
    <location>
        <begin position="98"/>
        <end position="175"/>
    </location>
</feature>
<keyword id="KW-1003">Cell membrane</keyword>
<keyword id="KW-1015">Disulfide bond</keyword>
<keyword id="KW-0297">G-protein coupled receptor</keyword>
<keyword id="KW-0325">Glycoprotein</keyword>
<keyword id="KW-0472">Membrane</keyword>
<keyword id="KW-0675">Receptor</keyword>
<keyword id="KW-1185">Reference proteome</keyword>
<keyword id="KW-0807">Transducer</keyword>
<keyword id="KW-0812">Transmembrane</keyword>
<keyword id="KW-1133">Transmembrane helix</keyword>
<organism>
    <name type="scientific">Rattus norvegicus</name>
    <name type="common">Rat</name>
    <dbReference type="NCBI Taxonomy" id="10116"/>
    <lineage>
        <taxon>Eukaryota</taxon>
        <taxon>Metazoa</taxon>
        <taxon>Chordata</taxon>
        <taxon>Craniata</taxon>
        <taxon>Vertebrata</taxon>
        <taxon>Euteleostomi</taxon>
        <taxon>Mammalia</taxon>
        <taxon>Eutheria</taxon>
        <taxon>Euarchontoglires</taxon>
        <taxon>Glires</taxon>
        <taxon>Rodentia</taxon>
        <taxon>Myomorpha</taxon>
        <taxon>Muroidea</taxon>
        <taxon>Muridae</taxon>
        <taxon>Murinae</taxon>
        <taxon>Rattus</taxon>
    </lineage>
</organism>
<gene>
    <name type="primary">Galr2</name>
    <name type="synonym">Galnr2</name>
</gene>
<name>GALR2_RAT</name>
<accession>O08726</accession>
<sequence length="372" mass="40676">MNGSGSQGAENTSQEGGSGGWQPEAVLVPLFFALIFLVGTVGNALVLAVLLRGGQAVSTTNLFILNLGVADLCFILCCVPFQATIYTLDDWVFGSLLCKAVHFLIFLTMHASSFTLAAVSLDRYLAIRYPLHSRELRTPRNALAAIGLIWGLALLFSGPYLSYYRQSQLANLTVCHPAWSAPRRRAMDLCTFVFSYLLPVLVLSLTYARTLRYLWRTVDPVTAGSGSQRAKRKVTRMIIIVAVLFCLCWMPHHALILCVWFGRFPLTRATYALRILSHLVSYANSCVNPIVYALVSKHFRKGFRKICAGLLRPAPRRASGRVSILAPGNHSGSMLEQESTDLTQVSEAAGPLVPPPALPNCTASSRTLDPAC</sequence>
<protein>
    <recommendedName>
        <fullName>Galanin receptor type 2</fullName>
        <shortName>GAL2-R</shortName>
        <shortName>GALR-2</shortName>
    </recommendedName>
</protein>
<reference key="1">
    <citation type="journal article" date="1997" name="FEBS Lett.">
        <title>Molecular cloning and characterization of a new receptor for galanin.</title>
        <authorList>
            <person name="Howard A.D."/>
            <person name="Tan C."/>
            <person name="Shiao L.L."/>
            <person name="Palyha O.C."/>
            <person name="McKee K.K."/>
            <person name="Weinberg D.H."/>
            <person name="Feighner S.D."/>
            <person name="Cascieri M.A."/>
            <person name="Smith R.G."/>
            <person name="van der Ploeg L.H.T."/>
            <person name="Sullivan K.A."/>
        </authorList>
    </citation>
    <scope>NUCLEOTIDE SEQUENCE [MRNA]</scope>
    <source>
        <tissue>Hypothalamus</tissue>
    </source>
</reference>
<reference key="2">
    <citation type="journal article" date="1997" name="J. Biol. Chem.">
        <title>Expression cloning of a rat hypothalamic galanin receptor coupled to phosphoinositide turnover.</title>
        <authorList>
            <person name="Smith K.E."/>
            <person name="Forray C."/>
            <person name="Walker M.W."/>
            <person name="Jones K.A."/>
            <person name="Tamm J.A."/>
            <person name="Bard J."/>
            <person name="Branchek T.A."/>
            <person name="Linemeyer D.L."/>
            <person name="Gerald C."/>
        </authorList>
    </citation>
    <scope>NUCLEOTIDE SEQUENCE [MRNA]</scope>
</reference>
<reference key="3">
    <citation type="journal article" date="1997" name="Mol. Pharmacol.">
        <title>Molecular cloning and pharmacological characterization of a new galanin receptor subtype.</title>
        <authorList>
            <person name="Wang S."/>
            <person name="Hashemi T."/>
            <person name="He C."/>
            <person name="Strader C."/>
            <person name="Bayne M."/>
        </authorList>
    </citation>
    <scope>NUCLEOTIDE SEQUENCE [MRNA]</scope>
    <source>
        <tissue>Hypothalamus</tissue>
    </source>
</reference>
<reference key="4">
    <citation type="journal article" date="1997" name="Brain Res. Mol. Brain Res.">
        <title>Cloning, pharmacological characterization and distribution of a novel galanin receptor.</title>
        <authorList>
            <person name="Fathi Z."/>
            <person name="Cunningham A.M."/>
            <person name="Iben L.G."/>
            <person name="Battaglino P.B."/>
            <person name="Ward S.A."/>
            <person name="Nichol K.A."/>
            <person name="Pine K.A."/>
            <person name="Wang J."/>
            <person name="Goldstein M.E."/>
            <person name="Iismaa T.P."/>
            <person name="Zimanyi I.A."/>
        </authorList>
    </citation>
    <scope>NUCLEOTIDE SEQUENCE [MRNA]</scope>
    <source>
        <tissue>Brain</tissue>
    </source>
</reference>
<reference key="5">
    <citation type="journal article" date="1998" name="Brain Res. Mol. Brain Res.">
        <authorList>
            <person name="Fathi Z."/>
            <person name="Cunningham A.M."/>
            <person name="Iben L.G."/>
            <person name="Battaglino P.B."/>
            <person name="Ward S.A."/>
            <person name="Nichol K.A."/>
            <person name="Pine K.A."/>
            <person name="Wang J."/>
            <person name="Goldstein M.E."/>
            <person name="Iismaa T.P."/>
            <person name="Zimanyi I.A."/>
        </authorList>
    </citation>
    <scope>ERRATUM OF PUBMED:9427506</scope>
</reference>
<comment type="function">
    <text>Receptor for the hormone galanin, GALP and spexin-1. The activity of this receptor is mediated by G proteins that activate the phospholipase C/protein kinase C pathway (via G(q)) and that inhibit adenylyl cyclase (via G(i)).</text>
</comment>
<comment type="subcellular location">
    <subcellularLocation>
        <location>Cell membrane</location>
        <topology>Multi-pass membrane protein</topology>
    </subcellularLocation>
</comment>
<comment type="similarity">
    <text evidence="2">Belongs to the G-protein coupled receptor 1 family.</text>
</comment>
<proteinExistence type="evidence at transcript level"/>
<evidence type="ECO:0000255" key="1"/>
<evidence type="ECO:0000255" key="2">
    <source>
        <dbReference type="PROSITE-ProRule" id="PRU00521"/>
    </source>
</evidence>
<evidence type="ECO:0000256" key="3">
    <source>
        <dbReference type="SAM" id="MobiDB-lite"/>
    </source>
</evidence>